<organism>
    <name type="scientific">Nostoc sp. (strain PCC 7120 / SAG 25.82 / UTEX 2576)</name>
    <dbReference type="NCBI Taxonomy" id="103690"/>
    <lineage>
        <taxon>Bacteria</taxon>
        <taxon>Bacillati</taxon>
        <taxon>Cyanobacteriota</taxon>
        <taxon>Cyanophyceae</taxon>
        <taxon>Nostocales</taxon>
        <taxon>Nostocaceae</taxon>
        <taxon>Nostoc</taxon>
    </lineage>
</organism>
<proteinExistence type="inferred from homology"/>
<accession>Q8YYB0</accession>
<reference key="1">
    <citation type="journal article" date="2001" name="DNA Res.">
        <title>Complete genomic sequence of the filamentous nitrogen-fixing cyanobacterium Anabaena sp. strain PCC 7120.</title>
        <authorList>
            <person name="Kaneko T."/>
            <person name="Nakamura Y."/>
            <person name="Wolk C.P."/>
            <person name="Kuritz T."/>
            <person name="Sasamoto S."/>
            <person name="Watanabe A."/>
            <person name="Iriguchi M."/>
            <person name="Ishikawa A."/>
            <person name="Kawashima K."/>
            <person name="Kimura T."/>
            <person name="Kishida Y."/>
            <person name="Kohara M."/>
            <person name="Matsumoto M."/>
            <person name="Matsuno A."/>
            <person name="Muraki A."/>
            <person name="Nakazaki N."/>
            <person name="Shimpo S."/>
            <person name="Sugimoto M."/>
            <person name="Takazawa M."/>
            <person name="Yamada M."/>
            <person name="Yasuda M."/>
            <person name="Tabata S."/>
        </authorList>
    </citation>
    <scope>NUCLEOTIDE SEQUENCE [LARGE SCALE GENOMIC DNA]</scope>
    <source>
        <strain>PCC 7120 / SAG 25.82 / UTEX 2576</strain>
    </source>
</reference>
<sequence>MTPSLSNFLWSLAWGTLIVVIPATVGLIFISQKDKIQRS</sequence>
<evidence type="ECO:0000255" key="1">
    <source>
        <dbReference type="HAMAP-Rule" id="MF_01386"/>
    </source>
</evidence>
<name>PSBX_NOSS1</name>
<protein>
    <recommendedName>
        <fullName evidence="1">Photosystem II reaction center protein X</fullName>
    </recommendedName>
</protein>
<feature type="chain" id="PRO_0000345363" description="Photosystem II reaction center protein X">
    <location>
        <begin position="1"/>
        <end position="39"/>
    </location>
</feature>
<feature type="transmembrane region" description="Helical" evidence="1">
    <location>
        <begin position="10"/>
        <end position="30"/>
    </location>
</feature>
<dbReference type="EMBL" id="BA000019">
    <property type="protein sequence ID" value="BAB72898.1"/>
    <property type="molecule type" value="Genomic_DNA"/>
</dbReference>
<dbReference type="PIR" id="AB1924">
    <property type="entry name" value="AB1924"/>
</dbReference>
<dbReference type="RefSeq" id="WP_010995115.1">
    <property type="nucleotide sequence ID" value="NZ_RSCN01000006.1"/>
</dbReference>
<dbReference type="SMR" id="Q8YYB0"/>
<dbReference type="STRING" id="103690.gene:10492955"/>
<dbReference type="KEGG" id="ana:asr0941"/>
<dbReference type="eggNOG" id="ENOG5033AJK">
    <property type="taxonomic scope" value="Bacteria"/>
</dbReference>
<dbReference type="OrthoDB" id="541645at2"/>
<dbReference type="Proteomes" id="UP000002483">
    <property type="component" value="Chromosome"/>
</dbReference>
<dbReference type="GO" id="GO:0009523">
    <property type="term" value="C:photosystem II"/>
    <property type="evidence" value="ECO:0007669"/>
    <property type="project" value="UniProtKB-KW"/>
</dbReference>
<dbReference type="GO" id="GO:0031676">
    <property type="term" value="C:plasma membrane-derived thylakoid membrane"/>
    <property type="evidence" value="ECO:0007669"/>
    <property type="project" value="UniProtKB-SubCell"/>
</dbReference>
<dbReference type="GO" id="GO:0015979">
    <property type="term" value="P:photosynthesis"/>
    <property type="evidence" value="ECO:0007669"/>
    <property type="project" value="UniProtKB-UniRule"/>
</dbReference>
<dbReference type="Gene3D" id="1.20.5.510">
    <property type="entry name" value="Single helix bin"/>
    <property type="match status" value="1"/>
</dbReference>
<dbReference type="HAMAP" id="MF_01386">
    <property type="entry name" value="PSII_PsbX_1"/>
    <property type="match status" value="1"/>
</dbReference>
<dbReference type="InterPro" id="IPR009518">
    <property type="entry name" value="PSII_PsbX"/>
</dbReference>
<dbReference type="InterPro" id="IPR023431">
    <property type="entry name" value="PSII_PsbX_type_1_subfam"/>
</dbReference>
<dbReference type="Pfam" id="PF06596">
    <property type="entry name" value="PsbX"/>
    <property type="match status" value="1"/>
</dbReference>
<comment type="function">
    <text evidence="1">Involved in the binding and/or turnover of quinones at the Q(B) site of photosystem II (PSII). PSII is a light-driven water plastoquinone oxidoreductase, using light energy to abstract electrons from H(2)O, generating a proton gradient subsequently used for ATP formation.</text>
</comment>
<comment type="subunit">
    <text evidence="1">PSII is composed of 1 copy each of membrane proteins PsbA, PsbB, PsbC, PsbD, PsbE, PsbF, PsbH, PsbI, PsbJ, PsbK, PsbL, PsbM, PsbT, PsbX, PsbY, PsbZ, Psb30/Ycf12, peripheral proteins PsbO, CyanoQ (PsbQ), PsbU, PsbV and a large number of cofactors. It forms dimeric complexes.</text>
</comment>
<comment type="subcellular location">
    <subcellularLocation>
        <location evidence="1">Cellular thylakoid membrane</location>
        <topology evidence="1">Single-pass membrane protein</topology>
    </subcellularLocation>
</comment>
<comment type="similarity">
    <text evidence="1">Belongs to the PsbX family. Type 1 subfamily.</text>
</comment>
<gene>
    <name evidence="1" type="primary">psbX</name>
    <name type="ordered locus">asr0941</name>
</gene>
<keyword id="KW-0472">Membrane</keyword>
<keyword id="KW-0602">Photosynthesis</keyword>
<keyword id="KW-0604">Photosystem II</keyword>
<keyword id="KW-1185">Reference proteome</keyword>
<keyword id="KW-0793">Thylakoid</keyword>
<keyword id="KW-0812">Transmembrane</keyword>
<keyword id="KW-1133">Transmembrane helix</keyword>